<keyword id="KW-1185">Reference proteome</keyword>
<protein>
    <recommendedName>
        <fullName>Gene 66 protein</fullName>
    </recommendedName>
    <alternativeName>
        <fullName>Gp66</fullName>
    </alternativeName>
</protein>
<organismHost>
    <name type="scientific">Mycobacterium</name>
    <dbReference type="NCBI Taxonomy" id="1763"/>
</organismHost>
<reference key="1">
    <citation type="journal article" date="1998" name="J. Mol. Biol.">
        <title>Genome structure of mycobacteriophage D29: implications for phage evolution.</title>
        <authorList>
            <person name="Ford M.E."/>
            <person name="Sarkis G.J."/>
            <person name="Belanger A.E."/>
            <person name="Hendrix R.W."/>
            <person name="Hatfull G.F."/>
        </authorList>
    </citation>
    <scope>NUCLEOTIDE SEQUENCE [LARGE SCALE GENOMIC DNA]</scope>
</reference>
<dbReference type="EMBL" id="AF022214">
    <property type="protein sequence ID" value="AAC18507.1"/>
    <property type="molecule type" value="Genomic_DNA"/>
</dbReference>
<dbReference type="PIR" id="A72808">
    <property type="entry name" value="A72808"/>
</dbReference>
<dbReference type="RefSeq" id="NP_046883.1">
    <property type="nucleotide sequence ID" value="NC_001900.1"/>
</dbReference>
<dbReference type="SMR" id="O64258"/>
<dbReference type="GeneID" id="1261635"/>
<dbReference type="KEGG" id="vg:1261635"/>
<dbReference type="OrthoDB" id="19076at10239"/>
<dbReference type="Proteomes" id="UP000002131">
    <property type="component" value="Segment"/>
</dbReference>
<dbReference type="GO" id="GO:0004112">
    <property type="term" value="F:cyclic-nucleotide phosphodiesterase activity"/>
    <property type="evidence" value="ECO:0000314"/>
    <property type="project" value="CACAO"/>
</dbReference>
<dbReference type="GO" id="GO:0008081">
    <property type="term" value="F:phosphoric diester hydrolase activity"/>
    <property type="evidence" value="ECO:0000314"/>
    <property type="project" value="CACAO"/>
</dbReference>
<dbReference type="Gene3D" id="3.60.21.10">
    <property type="match status" value="1"/>
</dbReference>
<dbReference type="InterPro" id="IPR004843">
    <property type="entry name" value="Calcineurin-like_PHP_ApaH"/>
</dbReference>
<dbReference type="InterPro" id="IPR029052">
    <property type="entry name" value="Metallo-depent_PP-like"/>
</dbReference>
<dbReference type="Pfam" id="PF00149">
    <property type="entry name" value="Metallophos"/>
    <property type="match status" value="1"/>
</dbReference>
<dbReference type="SUPFAM" id="SSF56300">
    <property type="entry name" value="Metallo-dependent phosphatases"/>
    <property type="match status" value="1"/>
</dbReference>
<name>VG66_BPMD2</name>
<proteinExistence type="predicted"/>
<gene>
    <name type="primary">66</name>
</gene>
<sequence>MSNVWFTSDLHIGHAKVAEDRDWAGPDHDLHLAELWDEQVGKEDVVWILGDISSGGTRAQLDALGWLLNRPGRKRLILGNHDRPHPMYRDAPRLSRLYWNVLDYMSTAARLRVPLDGGGHTNVLLSHFPYVGDHTAEQRFTQWRLRDEGLILLHGHTHSRIIRSTMTNPRQIHVGLDAWHDLVPMDEVREMVNDIEEGL</sequence>
<feature type="chain" id="PRO_0000164805" description="Gene 66 protein">
    <location>
        <begin position="1"/>
        <end position="199"/>
    </location>
</feature>
<accession>O64258</accession>
<organism>
    <name type="scientific">Mycobacterium phage D29</name>
    <name type="common">Mycobacteriophage D29</name>
    <dbReference type="NCBI Taxonomy" id="28369"/>
    <lineage>
        <taxon>Viruses</taxon>
        <taxon>Duplodnaviria</taxon>
        <taxon>Heunggongvirae</taxon>
        <taxon>Uroviricota</taxon>
        <taxon>Caudoviricetes</taxon>
        <taxon>Fromanvirus</taxon>
    </lineage>
</organism>